<feature type="chain" id="PRO_0000078900" description="Matrix protein 2">
    <location>
        <begin position="1"/>
        <end position="109"/>
    </location>
</feature>
<feature type="topological domain" description="Virion surface" evidence="2">
    <location>
        <begin position="1"/>
        <end position="4"/>
    </location>
</feature>
<feature type="transmembrane region" description="Helical; Signal-anchor for type III membrane protein" evidence="2">
    <location>
        <begin position="5"/>
        <end position="27"/>
    </location>
</feature>
<feature type="topological domain" description="Intravirion" evidence="2">
    <location>
        <begin position="28"/>
        <end position="109"/>
    </location>
</feature>
<feature type="site" description="Essential for channel activity, possibly by being protonated during channel activation, and by forming the channel gate and the selective filter" evidence="1">
    <location>
        <position position="19"/>
    </location>
</feature>
<feature type="site" description="Seems to be involved in pH gating" evidence="1">
    <location>
        <position position="23"/>
    </location>
</feature>
<evidence type="ECO:0000250" key="1"/>
<evidence type="ECO:0000255" key="2"/>
<evidence type="ECO:0000305" key="3"/>
<reference key="1">
    <citation type="journal article" date="1986" name="Virology">
        <title>Nucleotide sequence of RNA segment 7 of influenza B/Singapore/222/79: maintenance of a second large open reading frame.</title>
        <authorList>
            <person name="Hiebert S.W."/>
            <person name="Williams M.A."/>
            <person name="Lamb R.A."/>
        </authorList>
    </citation>
    <scope>NUCLEOTIDE SEQUENCE [GENOMIC RNA]</scope>
</reference>
<protein>
    <recommendedName>
        <fullName>Matrix protein 2</fullName>
    </recommendedName>
    <alternativeName>
        <fullName>BM2</fullName>
    </alternativeName>
</protein>
<name>BM2_INBSI</name>
<keyword id="KW-0175">Coiled coil</keyword>
<keyword id="KW-1032">Host cell membrane</keyword>
<keyword id="KW-1043">Host membrane</keyword>
<keyword id="KW-0375">Hydrogen ion transport</keyword>
<keyword id="KW-0407">Ion channel</keyword>
<keyword id="KW-0406">Ion transport</keyword>
<keyword id="KW-0472">Membrane</keyword>
<keyword id="KW-0597">Phosphoprotein</keyword>
<keyword id="KW-0735">Signal-anchor</keyword>
<keyword id="KW-0812">Transmembrane</keyword>
<keyword id="KW-1133">Transmembrane helix</keyword>
<keyword id="KW-0813">Transport</keyword>
<keyword id="KW-1182">Viral ion channel</keyword>
<keyword id="KW-0946">Virion</keyword>
<sequence>MLEPFQILSICSFILSALHFMAWTIGHLNQIKRGVNLKIRIRNPNKETINREVSILRHSYQKEIQAKETMKEVLSDNMEILSDHIVIEGLSAEEIIKMGETVLEVEELH</sequence>
<gene>
    <name type="primary">M</name>
</gene>
<proteinExistence type="inferred from homology"/>
<organismHost>
    <name type="scientific">Homo sapiens</name>
    <name type="common">Human</name>
    <dbReference type="NCBI Taxonomy" id="9606"/>
</organismHost>
<accession>P08383</accession>
<comment type="function">
    <text evidence="1">Forms presumably a highly low-pH gated proton-selective channel. Trp-23 may function as a minimalistic gate that opens and closes the pore. When the environmental pH is lower than a threshold, the BM2 channel would be activated and selectively transport protons across the membrane from the extracellular side to the cytoplasmic side. Crucial for the uncoating process. When the virion is internalized into the endosome, the channel acidifies the virion's interior, promoting the dissociation of matrix protein 1 (M1) from the ribonucleoprotein (RNP) thus allowing the transport of the RNP from the virion into the cell's nucleus. Also plays a role in viral protein secretory pathway. Elevates the intravesicular pH of normally acidic compartments, such as trans-Golgi network, preventing newly formed hemagglutinin from premature switching to the fusion-active conformation (By similarity). Plays a crucial role in virion assembly. Expressed in the late phase of the infection (By similarity).</text>
</comment>
<comment type="subunit">
    <text evidence="1">Homotetramer.</text>
</comment>
<comment type="subcellular location">
    <subcellularLocation>
        <location evidence="3">Virion membrane</location>
        <topology evidence="3">Single-pass type III membrane protein</topology>
    </subcellularLocation>
    <subcellularLocation>
        <location evidence="1">Host cell membrane</location>
        <topology evidence="1">Single-pass type III membrane protein</topology>
    </subcellularLocation>
    <text evidence="1">Transported to the plasma membrane through the trans Golgi network.</text>
</comment>
<comment type="PTM">
    <text>Phosphorylated by host.</text>
</comment>
<comment type="miscellaneous">
    <text>Influenza B virus genome RNA segment 7 encodes the M1 (AC P06816) and BM2 proteins. Normal translation produces the M1 protein. The M1 termination codon overlaps the BM2 initiation codon in an overlapping stop-start pentanucleotide 5'-UAAUG-3'. Termination of M1 translation triggers reinitiation on the BM2 AUG in the +2 open reading frame.</text>
</comment>
<organism>
    <name type="scientific">Influenza B virus (strain B/Singapore/222/1979)</name>
    <dbReference type="NCBI Taxonomy" id="107417"/>
    <lineage>
        <taxon>Viruses</taxon>
        <taxon>Riboviria</taxon>
        <taxon>Orthornavirae</taxon>
        <taxon>Negarnaviricota</taxon>
        <taxon>Polyploviricotina</taxon>
        <taxon>Insthoviricetes</taxon>
        <taxon>Articulavirales</taxon>
        <taxon>Orthomyxoviridae</taxon>
        <taxon>Betainfluenzavirus</taxon>
        <taxon>Betainfluenzavirus influenzae</taxon>
        <taxon>Influenza B virus</taxon>
    </lineage>
</organism>
<dbReference type="EMBL" id="M14909">
    <property type="protein sequence ID" value="AAA67101.1"/>
    <property type="molecule type" value="Genomic_RNA"/>
</dbReference>
<dbReference type="PIR" id="B25619">
    <property type="entry name" value="MFIVB2"/>
</dbReference>
<dbReference type="SMR" id="P08383"/>
<dbReference type="Proteomes" id="UP000137758">
    <property type="component" value="Genome"/>
</dbReference>
<dbReference type="GO" id="GO:0020002">
    <property type="term" value="C:host cell plasma membrane"/>
    <property type="evidence" value="ECO:0007669"/>
    <property type="project" value="UniProtKB-SubCell"/>
</dbReference>
<dbReference type="GO" id="GO:0016020">
    <property type="term" value="C:membrane"/>
    <property type="evidence" value="ECO:0007669"/>
    <property type="project" value="UniProtKB-KW"/>
</dbReference>
<dbReference type="GO" id="GO:0055036">
    <property type="term" value="C:virion membrane"/>
    <property type="evidence" value="ECO:0007669"/>
    <property type="project" value="UniProtKB-SubCell"/>
</dbReference>
<dbReference type="GO" id="GO:0015267">
    <property type="term" value="F:channel activity"/>
    <property type="evidence" value="ECO:0007669"/>
    <property type="project" value="UniProtKB-KW"/>
</dbReference>
<dbReference type="GO" id="GO:1902600">
    <property type="term" value="P:proton transmembrane transport"/>
    <property type="evidence" value="ECO:0007669"/>
    <property type="project" value="UniProtKB-KW"/>
</dbReference>
<dbReference type="Gene3D" id="6.10.250.350">
    <property type="match status" value="1"/>
</dbReference>
<dbReference type="InterPro" id="IPR006859">
    <property type="entry name" value="Flu_B_M2"/>
</dbReference>
<dbReference type="Pfam" id="PF04772">
    <property type="entry name" value="Flu_B_M2"/>
    <property type="match status" value="1"/>
</dbReference>